<comment type="function">
    <text evidence="1">DEAD-box RNA helicase possibly involved in RNA degradation. Unwinds dsRNA in both 5'- and 3'-directions, has RNA-dependent ATPase activity.</text>
</comment>
<comment type="catalytic activity">
    <reaction evidence="1">
        <text>ATP + H2O = ADP + phosphate + H(+)</text>
        <dbReference type="Rhea" id="RHEA:13065"/>
        <dbReference type="ChEBI" id="CHEBI:15377"/>
        <dbReference type="ChEBI" id="CHEBI:15378"/>
        <dbReference type="ChEBI" id="CHEBI:30616"/>
        <dbReference type="ChEBI" id="CHEBI:43474"/>
        <dbReference type="ChEBI" id="CHEBI:456216"/>
        <dbReference type="EC" id="3.6.4.13"/>
    </reaction>
</comment>
<comment type="subunit">
    <text evidence="1">Oligomerizes, may be a member of the RNA degradosome.</text>
</comment>
<comment type="subcellular location">
    <subcellularLocation>
        <location evidence="1">Cytoplasm</location>
    </subcellularLocation>
</comment>
<comment type="similarity">
    <text evidence="1">Belongs to the DEAD box helicase family. CshA subfamily.</text>
</comment>
<name>CSHA_BACAN</name>
<organism>
    <name type="scientific">Bacillus anthracis</name>
    <dbReference type="NCBI Taxonomy" id="1392"/>
    <lineage>
        <taxon>Bacteria</taxon>
        <taxon>Bacillati</taxon>
        <taxon>Bacillota</taxon>
        <taxon>Bacilli</taxon>
        <taxon>Bacillales</taxon>
        <taxon>Bacillaceae</taxon>
        <taxon>Bacillus</taxon>
        <taxon>Bacillus cereus group</taxon>
    </lineage>
</organism>
<gene>
    <name evidence="1" type="primary">cshA</name>
    <name type="ordered locus">BA_0247</name>
    <name type="ordered locus">GBAA_0247</name>
    <name type="ordered locus">BAS0233</name>
</gene>
<reference key="1">
    <citation type="journal article" date="2003" name="Nature">
        <title>The genome sequence of Bacillus anthracis Ames and comparison to closely related bacteria.</title>
        <authorList>
            <person name="Read T.D."/>
            <person name="Peterson S.N."/>
            <person name="Tourasse N.J."/>
            <person name="Baillie L.W."/>
            <person name="Paulsen I.T."/>
            <person name="Nelson K.E."/>
            <person name="Tettelin H."/>
            <person name="Fouts D.E."/>
            <person name="Eisen J.A."/>
            <person name="Gill S.R."/>
            <person name="Holtzapple E.K."/>
            <person name="Okstad O.A."/>
            <person name="Helgason E."/>
            <person name="Rilstone J."/>
            <person name="Wu M."/>
            <person name="Kolonay J.F."/>
            <person name="Beanan M.J."/>
            <person name="Dodson R.J."/>
            <person name="Brinkac L.M."/>
            <person name="Gwinn M.L."/>
            <person name="DeBoy R.T."/>
            <person name="Madpu R."/>
            <person name="Daugherty S.C."/>
            <person name="Durkin A.S."/>
            <person name="Haft D.H."/>
            <person name="Nelson W.C."/>
            <person name="Peterson J.D."/>
            <person name="Pop M."/>
            <person name="Khouri H.M."/>
            <person name="Radune D."/>
            <person name="Benton J.L."/>
            <person name="Mahamoud Y."/>
            <person name="Jiang L."/>
            <person name="Hance I.R."/>
            <person name="Weidman J.F."/>
            <person name="Berry K.J."/>
            <person name="Plaut R.D."/>
            <person name="Wolf A.M."/>
            <person name="Watkins K.L."/>
            <person name="Nierman W.C."/>
            <person name="Hazen A."/>
            <person name="Cline R.T."/>
            <person name="Redmond C."/>
            <person name="Thwaite J.E."/>
            <person name="White O."/>
            <person name="Salzberg S.L."/>
            <person name="Thomason B."/>
            <person name="Friedlander A.M."/>
            <person name="Koehler T.M."/>
            <person name="Hanna P.C."/>
            <person name="Kolstoe A.-B."/>
            <person name="Fraser C.M."/>
        </authorList>
    </citation>
    <scope>NUCLEOTIDE SEQUENCE [LARGE SCALE GENOMIC DNA]</scope>
    <source>
        <strain>Ames / isolate Porton</strain>
    </source>
</reference>
<reference key="2">
    <citation type="journal article" date="2009" name="J. Bacteriol.">
        <title>The complete genome sequence of Bacillus anthracis Ames 'Ancestor'.</title>
        <authorList>
            <person name="Ravel J."/>
            <person name="Jiang L."/>
            <person name="Stanley S.T."/>
            <person name="Wilson M.R."/>
            <person name="Decker R.S."/>
            <person name="Read T.D."/>
            <person name="Worsham P."/>
            <person name="Keim P.S."/>
            <person name="Salzberg S.L."/>
            <person name="Fraser-Liggett C.M."/>
            <person name="Rasko D.A."/>
        </authorList>
    </citation>
    <scope>NUCLEOTIDE SEQUENCE [LARGE SCALE GENOMIC DNA]</scope>
    <source>
        <strain>Ames ancestor</strain>
    </source>
</reference>
<reference key="3">
    <citation type="submission" date="2004-01" db="EMBL/GenBank/DDBJ databases">
        <title>Complete genome sequence of Bacillus anthracis Sterne.</title>
        <authorList>
            <person name="Brettin T.S."/>
            <person name="Bruce D."/>
            <person name="Challacombe J.F."/>
            <person name="Gilna P."/>
            <person name="Han C."/>
            <person name="Hill K."/>
            <person name="Hitchcock P."/>
            <person name="Jackson P."/>
            <person name="Keim P."/>
            <person name="Longmire J."/>
            <person name="Lucas S."/>
            <person name="Okinaka R."/>
            <person name="Richardson P."/>
            <person name="Rubin E."/>
            <person name="Tice H."/>
        </authorList>
    </citation>
    <scope>NUCLEOTIDE SEQUENCE [LARGE SCALE GENOMIC DNA]</scope>
    <source>
        <strain>Sterne</strain>
    </source>
</reference>
<feature type="chain" id="PRO_0000280049" description="DEAD-box ATP-dependent RNA helicase CshA">
    <location>
        <begin position="1"/>
        <end position="528"/>
    </location>
</feature>
<feature type="domain" description="Helicase ATP-binding" evidence="1">
    <location>
        <begin position="33"/>
        <end position="203"/>
    </location>
</feature>
<feature type="domain" description="Helicase C-terminal" evidence="1">
    <location>
        <begin position="214"/>
        <end position="374"/>
    </location>
</feature>
<feature type="region of interest" description="Disordered" evidence="2">
    <location>
        <begin position="428"/>
        <end position="528"/>
    </location>
</feature>
<feature type="short sequence motif" description="Q motif">
    <location>
        <begin position="2"/>
        <end position="30"/>
    </location>
</feature>
<feature type="short sequence motif" description="DEAD box">
    <location>
        <begin position="151"/>
        <end position="154"/>
    </location>
</feature>
<feature type="compositionally biased region" description="Basic and acidic residues" evidence="2">
    <location>
        <begin position="458"/>
        <end position="506"/>
    </location>
</feature>
<feature type="compositionally biased region" description="Basic residues" evidence="2">
    <location>
        <begin position="518"/>
        <end position="528"/>
    </location>
</feature>
<feature type="binding site" evidence="1">
    <location>
        <begin position="46"/>
        <end position="53"/>
    </location>
    <ligand>
        <name>ATP</name>
        <dbReference type="ChEBI" id="CHEBI:30616"/>
    </ligand>
</feature>
<sequence length="528" mass="58944">MTTFRELGLSDSLLQSVESMGFEEATPIQAETIPHALQGKDIIGQAQTGTGKTAAFGLPLLDKVDTHKESVQGIVIAPTRELAIQVGEELYKIGKHKRVRILPIYGGQDINRQIRALKKHPHIIVGTPGRILDHINRKTLRLQNVETVVLDEADEMLNMGFIEDIEAILTDVPETHQTLLFSATMPDPIRRIAERFMTEPQHIKVKAKEVTMPNIQQFYLEVQEKKKFDVLTRLLDIQSPELAIVFGRTKRRVDELSEALNLRGYAAEGIHGDLTQAKRMSVLRKFKEGSIEVLVATDVAARGLDISGVTHVYNFDIPQDPESYVHRIGRTGRAGKKGIAMLFVTPRESGQLKNIERTTKRKMDRMDAPTLDEALEGQQRLIAEKLQSTIENENLAYYKRIAEEMLEENDSVTVVAAALKMMTKEPDTTPIALTSEPPVVSRGGGSKKRGGNGGGYRDGNRNRSRDGRGGDGRNRDRNRDGRNRDGNRDRNREGSRDGNRGRRGEGQGRPGSSNGRGERKHHSRKPQA</sequence>
<keyword id="KW-0067">ATP-binding</keyword>
<keyword id="KW-0963">Cytoplasm</keyword>
<keyword id="KW-0347">Helicase</keyword>
<keyword id="KW-0378">Hydrolase</keyword>
<keyword id="KW-0547">Nucleotide-binding</keyword>
<keyword id="KW-1185">Reference proteome</keyword>
<keyword id="KW-0694">RNA-binding</keyword>
<keyword id="KW-0346">Stress response</keyword>
<accession>Q81VG0</accession>
<accession>Q6I4G2</accession>
<accession>Q6KY64</accession>
<dbReference type="EC" id="3.6.4.13" evidence="1"/>
<dbReference type="EMBL" id="AE016879">
    <property type="protein sequence ID" value="AAP24286.1"/>
    <property type="molecule type" value="Genomic_DNA"/>
</dbReference>
<dbReference type="EMBL" id="AE017334">
    <property type="protein sequence ID" value="AAT29328.1"/>
    <property type="molecule type" value="Genomic_DNA"/>
</dbReference>
<dbReference type="EMBL" id="AE017225">
    <property type="protein sequence ID" value="AAT52569.1"/>
    <property type="molecule type" value="Genomic_DNA"/>
</dbReference>
<dbReference type="RefSeq" id="NP_842800.1">
    <property type="nucleotide sequence ID" value="NC_003997.3"/>
</dbReference>
<dbReference type="RefSeq" id="WP_000206587.1">
    <property type="nucleotide sequence ID" value="NZ_WXXJ01000025.1"/>
</dbReference>
<dbReference type="RefSeq" id="YP_026518.1">
    <property type="nucleotide sequence ID" value="NC_005945.1"/>
</dbReference>
<dbReference type="SMR" id="Q81VG0"/>
<dbReference type="STRING" id="261594.GBAA_0247"/>
<dbReference type="DNASU" id="1087008"/>
<dbReference type="GeneID" id="45020285"/>
<dbReference type="KEGG" id="ban:BA_0247"/>
<dbReference type="KEGG" id="bar:GBAA_0247"/>
<dbReference type="KEGG" id="bat:BAS0233"/>
<dbReference type="PATRIC" id="fig|198094.11.peg.241"/>
<dbReference type="eggNOG" id="COG0513">
    <property type="taxonomic scope" value="Bacteria"/>
</dbReference>
<dbReference type="HOGENOM" id="CLU_003041_21_0_9"/>
<dbReference type="OMA" id="FGCQALV"/>
<dbReference type="OrthoDB" id="9805696at2"/>
<dbReference type="Proteomes" id="UP000000427">
    <property type="component" value="Chromosome"/>
</dbReference>
<dbReference type="Proteomes" id="UP000000594">
    <property type="component" value="Chromosome"/>
</dbReference>
<dbReference type="GO" id="GO:0043590">
    <property type="term" value="C:bacterial nucleoid"/>
    <property type="evidence" value="ECO:0000250"/>
    <property type="project" value="UniProtKB"/>
</dbReference>
<dbReference type="GO" id="GO:0005829">
    <property type="term" value="C:cytosol"/>
    <property type="evidence" value="ECO:0007669"/>
    <property type="project" value="TreeGrafter"/>
</dbReference>
<dbReference type="GO" id="GO:0005840">
    <property type="term" value="C:ribosome"/>
    <property type="evidence" value="ECO:0007669"/>
    <property type="project" value="TreeGrafter"/>
</dbReference>
<dbReference type="GO" id="GO:0005524">
    <property type="term" value="F:ATP binding"/>
    <property type="evidence" value="ECO:0000250"/>
    <property type="project" value="UniProtKB"/>
</dbReference>
<dbReference type="GO" id="GO:0016887">
    <property type="term" value="F:ATP hydrolysis activity"/>
    <property type="evidence" value="ECO:0007669"/>
    <property type="project" value="RHEA"/>
</dbReference>
<dbReference type="GO" id="GO:0003723">
    <property type="term" value="F:RNA binding"/>
    <property type="evidence" value="ECO:0000250"/>
    <property type="project" value="UniProtKB"/>
</dbReference>
<dbReference type="GO" id="GO:0003724">
    <property type="term" value="F:RNA helicase activity"/>
    <property type="evidence" value="ECO:0000250"/>
    <property type="project" value="UniProtKB"/>
</dbReference>
<dbReference type="GO" id="GO:0033592">
    <property type="term" value="F:RNA strand annealing activity"/>
    <property type="evidence" value="ECO:0007669"/>
    <property type="project" value="TreeGrafter"/>
</dbReference>
<dbReference type="GO" id="GO:0009409">
    <property type="term" value="P:response to cold"/>
    <property type="evidence" value="ECO:0007669"/>
    <property type="project" value="TreeGrafter"/>
</dbReference>
<dbReference type="GO" id="GO:0006401">
    <property type="term" value="P:RNA catabolic process"/>
    <property type="evidence" value="ECO:0007669"/>
    <property type="project" value="UniProtKB-UniRule"/>
</dbReference>
<dbReference type="CDD" id="cd00268">
    <property type="entry name" value="DEADc"/>
    <property type="match status" value="1"/>
</dbReference>
<dbReference type="CDD" id="cd18787">
    <property type="entry name" value="SF2_C_DEAD"/>
    <property type="match status" value="1"/>
</dbReference>
<dbReference type="FunFam" id="3.40.50.300:FF:000108">
    <property type="entry name" value="ATP-dependent RNA helicase RhlE"/>
    <property type="match status" value="1"/>
</dbReference>
<dbReference type="FunFam" id="3.40.50.300:FF:000783">
    <property type="entry name" value="DEAD-box ATP-dependent RNA helicase CshA"/>
    <property type="match status" value="1"/>
</dbReference>
<dbReference type="Gene3D" id="3.40.50.300">
    <property type="entry name" value="P-loop containing nucleotide triphosphate hydrolases"/>
    <property type="match status" value="2"/>
</dbReference>
<dbReference type="HAMAP" id="MF_01493">
    <property type="entry name" value="DEAD_helicase_CshA"/>
    <property type="match status" value="1"/>
</dbReference>
<dbReference type="InterPro" id="IPR011545">
    <property type="entry name" value="DEAD/DEAH_box_helicase_dom"/>
</dbReference>
<dbReference type="InterPro" id="IPR050547">
    <property type="entry name" value="DEAD_box_RNA_helicases"/>
</dbReference>
<dbReference type="InterPro" id="IPR030880">
    <property type="entry name" value="DEAD_helicase_CshA"/>
</dbReference>
<dbReference type="InterPro" id="IPR014001">
    <property type="entry name" value="Helicase_ATP-bd"/>
</dbReference>
<dbReference type="InterPro" id="IPR001650">
    <property type="entry name" value="Helicase_C-like"/>
</dbReference>
<dbReference type="InterPro" id="IPR027417">
    <property type="entry name" value="P-loop_NTPase"/>
</dbReference>
<dbReference type="InterPro" id="IPR000629">
    <property type="entry name" value="RNA-helicase_DEAD-box_CS"/>
</dbReference>
<dbReference type="InterPro" id="IPR014014">
    <property type="entry name" value="RNA_helicase_DEAD_Q_motif"/>
</dbReference>
<dbReference type="PANTHER" id="PTHR47963">
    <property type="entry name" value="DEAD-BOX ATP-DEPENDENT RNA HELICASE 47, MITOCHONDRIAL"/>
    <property type="match status" value="1"/>
</dbReference>
<dbReference type="PANTHER" id="PTHR47963:SF5">
    <property type="entry name" value="DEAD-BOX ATP-DEPENDENT RNA HELICASE CSHA"/>
    <property type="match status" value="1"/>
</dbReference>
<dbReference type="Pfam" id="PF00270">
    <property type="entry name" value="DEAD"/>
    <property type="match status" value="1"/>
</dbReference>
<dbReference type="Pfam" id="PF25399">
    <property type="entry name" value="DeaD_dimer"/>
    <property type="match status" value="1"/>
</dbReference>
<dbReference type="Pfam" id="PF00271">
    <property type="entry name" value="Helicase_C"/>
    <property type="match status" value="1"/>
</dbReference>
<dbReference type="SMART" id="SM00487">
    <property type="entry name" value="DEXDc"/>
    <property type="match status" value="1"/>
</dbReference>
<dbReference type="SMART" id="SM00490">
    <property type="entry name" value="HELICc"/>
    <property type="match status" value="1"/>
</dbReference>
<dbReference type="SUPFAM" id="SSF52540">
    <property type="entry name" value="P-loop containing nucleoside triphosphate hydrolases"/>
    <property type="match status" value="1"/>
</dbReference>
<dbReference type="PROSITE" id="PS00039">
    <property type="entry name" value="DEAD_ATP_HELICASE"/>
    <property type="match status" value="1"/>
</dbReference>
<dbReference type="PROSITE" id="PS51192">
    <property type="entry name" value="HELICASE_ATP_BIND_1"/>
    <property type="match status" value="1"/>
</dbReference>
<dbReference type="PROSITE" id="PS51194">
    <property type="entry name" value="HELICASE_CTER"/>
    <property type="match status" value="1"/>
</dbReference>
<dbReference type="PROSITE" id="PS51195">
    <property type="entry name" value="Q_MOTIF"/>
    <property type="match status" value="1"/>
</dbReference>
<protein>
    <recommendedName>
        <fullName evidence="1">DEAD-box ATP-dependent RNA helicase CshA</fullName>
        <ecNumber evidence="1">3.6.4.13</ecNumber>
    </recommendedName>
</protein>
<evidence type="ECO:0000255" key="1">
    <source>
        <dbReference type="HAMAP-Rule" id="MF_01493"/>
    </source>
</evidence>
<evidence type="ECO:0000256" key="2">
    <source>
        <dbReference type="SAM" id="MobiDB-lite"/>
    </source>
</evidence>
<proteinExistence type="inferred from homology"/>